<evidence type="ECO:0000255" key="1">
    <source>
        <dbReference type="HAMAP-Rule" id="MF_01043"/>
    </source>
</evidence>
<protein>
    <recommendedName>
        <fullName evidence="1">Glycerol-3-phosphate acyltransferase 2</fullName>
    </recommendedName>
    <alternativeName>
        <fullName evidence="1">Acyl-PO4 G3P acyltransferase 2</fullName>
    </alternativeName>
    <alternativeName>
        <fullName evidence="1">Acyl-phosphate--glycerol-3-phosphate acyltransferase 2</fullName>
    </alternativeName>
    <alternativeName>
        <fullName evidence="1">G3P acyltransferase 2</fullName>
        <shortName evidence="1">GPAT 2</shortName>
        <ecNumber evidence="1">2.3.1.275</ecNumber>
    </alternativeName>
    <alternativeName>
        <fullName evidence="1">Lysophosphatidic acid synthase 2</fullName>
        <shortName evidence="1">LPA synthase 2</shortName>
    </alternativeName>
</protein>
<keyword id="KW-1003">Cell membrane</keyword>
<keyword id="KW-0444">Lipid biosynthesis</keyword>
<keyword id="KW-0443">Lipid metabolism</keyword>
<keyword id="KW-0472">Membrane</keyword>
<keyword id="KW-0594">Phospholipid biosynthesis</keyword>
<keyword id="KW-1208">Phospholipid metabolism</keyword>
<keyword id="KW-0808">Transferase</keyword>
<keyword id="KW-0812">Transmembrane</keyword>
<keyword id="KW-1133">Transmembrane helix</keyword>
<sequence length="198" mass="21187">MVTTYLLFIVAYLLGSIPFALVVGKIGYGIDIREHGSGNLGGTNTFRTLGKKAGFIVTIADILKGTLATSLPIIFALDIHPLWFGLAAVLGHVYPIFAKFRGGKAVATSAGVLLCYSPVVFAILAVVFFSLLFTTRYVSLSSMVTAVVAVIASIVSGDKIFIIAMCLLAGMVIYKHRANIGRIINKTEPKANFSKKQK</sequence>
<proteinExistence type="inferred from homology"/>
<reference key="1">
    <citation type="journal article" date="2004" name="Nucleic Acids Res.">
        <title>The genome sequence of Bacillus cereus ATCC 10987 reveals metabolic adaptations and a large plasmid related to Bacillus anthracis pXO1.</title>
        <authorList>
            <person name="Rasko D.A."/>
            <person name="Ravel J."/>
            <person name="Oekstad O.A."/>
            <person name="Helgason E."/>
            <person name="Cer R.Z."/>
            <person name="Jiang L."/>
            <person name="Shores K.A."/>
            <person name="Fouts D.E."/>
            <person name="Tourasse N.J."/>
            <person name="Angiuoli S.V."/>
            <person name="Kolonay J.F."/>
            <person name="Nelson W.C."/>
            <person name="Kolstoe A.-B."/>
            <person name="Fraser C.M."/>
            <person name="Read T.D."/>
        </authorList>
    </citation>
    <scope>NUCLEOTIDE SEQUENCE [LARGE SCALE GENOMIC DNA]</scope>
    <source>
        <strain>ATCC 10987 / NRS 248</strain>
    </source>
</reference>
<name>PLSY2_BACC1</name>
<feature type="chain" id="PRO_0000188318" description="Glycerol-3-phosphate acyltransferase 2">
    <location>
        <begin position="1"/>
        <end position="198"/>
    </location>
</feature>
<feature type="transmembrane region" description="Helical" evidence="1">
    <location>
        <begin position="4"/>
        <end position="24"/>
    </location>
</feature>
<feature type="transmembrane region" description="Helical" evidence="1">
    <location>
        <begin position="71"/>
        <end position="91"/>
    </location>
</feature>
<feature type="transmembrane region" description="Helical" evidence="1">
    <location>
        <begin position="113"/>
        <end position="133"/>
    </location>
</feature>
<feature type="transmembrane region" description="Helical" evidence="1">
    <location>
        <begin position="147"/>
        <end position="167"/>
    </location>
</feature>
<gene>
    <name evidence="1" type="primary">plsY2</name>
    <name type="ordered locus">BCE_3624</name>
</gene>
<dbReference type="EC" id="2.3.1.275" evidence="1"/>
<dbReference type="EMBL" id="AE017194">
    <property type="protein sequence ID" value="AAS42529.1"/>
    <property type="molecule type" value="Genomic_DNA"/>
</dbReference>
<dbReference type="SMR" id="Q733N4"/>
<dbReference type="KEGG" id="bca:BCE_3624"/>
<dbReference type="HOGENOM" id="CLU_081254_4_0_9"/>
<dbReference type="UniPathway" id="UPA00085"/>
<dbReference type="Proteomes" id="UP000002527">
    <property type="component" value="Chromosome"/>
</dbReference>
<dbReference type="GO" id="GO:0005886">
    <property type="term" value="C:plasma membrane"/>
    <property type="evidence" value="ECO:0007669"/>
    <property type="project" value="UniProtKB-SubCell"/>
</dbReference>
<dbReference type="GO" id="GO:0043772">
    <property type="term" value="F:acyl-phosphate glycerol-3-phosphate acyltransferase activity"/>
    <property type="evidence" value="ECO:0007669"/>
    <property type="project" value="UniProtKB-UniRule"/>
</dbReference>
<dbReference type="GO" id="GO:0008654">
    <property type="term" value="P:phospholipid biosynthetic process"/>
    <property type="evidence" value="ECO:0007669"/>
    <property type="project" value="UniProtKB-UniRule"/>
</dbReference>
<dbReference type="HAMAP" id="MF_01043">
    <property type="entry name" value="PlsY"/>
    <property type="match status" value="1"/>
</dbReference>
<dbReference type="InterPro" id="IPR003811">
    <property type="entry name" value="G3P_acylTferase_PlsY"/>
</dbReference>
<dbReference type="NCBIfam" id="TIGR00023">
    <property type="entry name" value="glycerol-3-phosphate 1-O-acyltransferase PlsY"/>
    <property type="match status" value="1"/>
</dbReference>
<dbReference type="PANTHER" id="PTHR30309:SF0">
    <property type="entry name" value="GLYCEROL-3-PHOSPHATE ACYLTRANSFERASE-RELATED"/>
    <property type="match status" value="1"/>
</dbReference>
<dbReference type="PANTHER" id="PTHR30309">
    <property type="entry name" value="INNER MEMBRANE PROTEIN YGIH"/>
    <property type="match status" value="1"/>
</dbReference>
<dbReference type="Pfam" id="PF02660">
    <property type="entry name" value="G3P_acyltransf"/>
    <property type="match status" value="1"/>
</dbReference>
<dbReference type="SMART" id="SM01207">
    <property type="entry name" value="G3P_acyltransf"/>
    <property type="match status" value="1"/>
</dbReference>
<organism>
    <name type="scientific">Bacillus cereus (strain ATCC 10987 / NRS 248)</name>
    <dbReference type="NCBI Taxonomy" id="222523"/>
    <lineage>
        <taxon>Bacteria</taxon>
        <taxon>Bacillati</taxon>
        <taxon>Bacillota</taxon>
        <taxon>Bacilli</taxon>
        <taxon>Bacillales</taxon>
        <taxon>Bacillaceae</taxon>
        <taxon>Bacillus</taxon>
        <taxon>Bacillus cereus group</taxon>
    </lineage>
</organism>
<accession>Q733N4</accession>
<comment type="function">
    <text evidence="1">Catalyzes the transfer of an acyl group from acyl-phosphate (acyl-PO(4)) to glycerol-3-phosphate (G3P) to form lysophosphatidic acid (LPA). This enzyme utilizes acyl-phosphate as fatty acyl donor, but not acyl-CoA or acyl-ACP.</text>
</comment>
<comment type="catalytic activity">
    <reaction evidence="1">
        <text>an acyl phosphate + sn-glycerol 3-phosphate = a 1-acyl-sn-glycero-3-phosphate + phosphate</text>
        <dbReference type="Rhea" id="RHEA:34075"/>
        <dbReference type="ChEBI" id="CHEBI:43474"/>
        <dbReference type="ChEBI" id="CHEBI:57597"/>
        <dbReference type="ChEBI" id="CHEBI:57970"/>
        <dbReference type="ChEBI" id="CHEBI:59918"/>
        <dbReference type="EC" id="2.3.1.275"/>
    </reaction>
</comment>
<comment type="pathway">
    <text evidence="1">Lipid metabolism; phospholipid metabolism.</text>
</comment>
<comment type="subunit">
    <text evidence="1">Probably interacts with PlsX.</text>
</comment>
<comment type="subcellular location">
    <subcellularLocation>
        <location evidence="1">Cell membrane</location>
        <topology evidence="1">Multi-pass membrane protein</topology>
    </subcellularLocation>
</comment>
<comment type="similarity">
    <text evidence="1">Belongs to the PlsY family.</text>
</comment>